<keyword id="KW-0025">Alternative splicing</keyword>
<keyword id="KW-0106">Calcium</keyword>
<keyword id="KW-1015">Disulfide bond</keyword>
<keyword id="KW-0245">EGF-like domain</keyword>
<keyword id="KW-0256">Endoplasmic reticulum</keyword>
<keyword id="KW-0325">Glycoprotein</keyword>
<keyword id="KW-0413">Isomerase</keyword>
<keyword id="KW-0472">Membrane</keyword>
<keyword id="KW-0676">Redox-active center</keyword>
<keyword id="KW-1185">Reference proteome</keyword>
<keyword id="KW-0677">Repeat</keyword>
<keyword id="KW-0732">Signal</keyword>
<keyword id="KW-0812">Transmembrane</keyword>
<keyword id="KW-1133">Transmembrane helix</keyword>
<sequence>MSRILLLLAVLIGATSQKEVTIKNEKCRTCNFLVSTFDEGLKKTARHHFAGGDTAWEEKNLGKYKTSETRLIEVLEGVCKKSSLPNMDNFMGIAEIEFKCSTQLEKHEETIEEFYYNQQHNNMSNWLCVEQLKLCCPDGHFGKNCEQCPGLSEKADVCFGKGSCHGDGSREGSGKCKCETGYTGNLCRYCDIEYFEESRTVQGVVCKKCHEGCLGVCSSESSKGCSKCKNGWKLTEEGCADVNECQNESACTKEHEICVNTVGSFKCECKEGYKKDDEQNCQFDVEASPDRPFMPIDQQLKLIAFSSLIIIITFVVWHGSPVLYVLTGITIVALILVDLYVNPDTIPDEAKRFLGY</sequence>
<proteinExistence type="evidence at protein level"/>
<accession>Q19267</accession>
<accession>A7LPH5</accession>
<name>CREL1_CAEEL</name>
<organism evidence="8">
    <name type="scientific">Caenorhabditis elegans</name>
    <dbReference type="NCBI Taxonomy" id="6239"/>
    <lineage>
        <taxon>Eukaryota</taxon>
        <taxon>Metazoa</taxon>
        <taxon>Ecdysozoa</taxon>
        <taxon>Nematoda</taxon>
        <taxon>Chromadorea</taxon>
        <taxon>Rhabditida</taxon>
        <taxon>Rhabditina</taxon>
        <taxon>Rhabditomorpha</taxon>
        <taxon>Rhabditoidea</taxon>
        <taxon>Rhabditidae</taxon>
        <taxon>Peloderinae</taxon>
        <taxon>Caenorhabditis</taxon>
    </lineage>
</organism>
<evidence type="ECO:0000255" key="1"/>
<evidence type="ECO:0000255" key="2">
    <source>
        <dbReference type="PROSITE-ProRule" id="PRU00076"/>
    </source>
</evidence>
<evidence type="ECO:0000255" key="3">
    <source>
        <dbReference type="PROSITE-ProRule" id="PRU00498"/>
    </source>
</evidence>
<evidence type="ECO:0000269" key="4">
    <source>
    </source>
</evidence>
<evidence type="ECO:0000303" key="5">
    <source>
    </source>
</evidence>
<evidence type="ECO:0000305" key="6"/>
<evidence type="ECO:0000305" key="7">
    <source>
    </source>
</evidence>
<evidence type="ECO:0000312" key="8">
    <source>
        <dbReference type="Proteomes" id="UP000001940"/>
    </source>
</evidence>
<evidence type="ECO:0000312" key="9">
    <source>
        <dbReference type="WormBase" id="F09E8.2a"/>
    </source>
</evidence>
<evidence type="ECO:0000312" key="10">
    <source>
        <dbReference type="WormBase" id="F09E8.2b"/>
    </source>
</evidence>
<dbReference type="EC" id="5.3.4.1" evidence="4"/>
<dbReference type="EMBL" id="BX284604">
    <property type="protein sequence ID" value="CAA98055.1"/>
    <property type="molecule type" value="Genomic_DNA"/>
</dbReference>
<dbReference type="EMBL" id="BX284604">
    <property type="protein sequence ID" value="CAO82025.1"/>
    <property type="molecule type" value="Genomic_DNA"/>
</dbReference>
<dbReference type="PIR" id="T20656">
    <property type="entry name" value="T20656"/>
</dbReference>
<dbReference type="RefSeq" id="NP_001122767.1">
    <property type="nucleotide sequence ID" value="NM_001129295.2"/>
</dbReference>
<dbReference type="RefSeq" id="NP_001379479.1">
    <molecule id="Q19267-2"/>
    <property type="nucleotide sequence ID" value="NM_001392424.1"/>
</dbReference>
<dbReference type="RefSeq" id="NP_502530.1">
    <molecule id="Q19267-1"/>
    <property type="nucleotide sequence ID" value="NM_070129.8"/>
</dbReference>
<dbReference type="FunCoup" id="Q19267">
    <property type="interactions" value="2047"/>
</dbReference>
<dbReference type="STRING" id="6239.F09E8.2a.1"/>
<dbReference type="GlyCosmos" id="Q19267">
    <property type="glycosylation" value="2 sites, No reported glycans"/>
</dbReference>
<dbReference type="PaxDb" id="6239-F09E8.2a"/>
<dbReference type="PeptideAtlas" id="Q19267"/>
<dbReference type="EnsemblMetazoa" id="F09E8.2a.1">
    <molecule id="Q19267-1"/>
    <property type="protein sequence ID" value="F09E8.2a.1"/>
    <property type="gene ID" value="WBGene00008624"/>
</dbReference>
<dbReference type="EnsemblMetazoa" id="F09E8.2a.2">
    <molecule id="Q19267-1"/>
    <property type="protein sequence ID" value="F09E8.2a.2"/>
    <property type="gene ID" value="WBGene00008624"/>
</dbReference>
<dbReference type="EnsemblMetazoa" id="F09E8.2b.1">
    <molecule id="Q19267-2"/>
    <property type="protein sequence ID" value="F09E8.2b.1"/>
    <property type="gene ID" value="WBGene00008624"/>
</dbReference>
<dbReference type="EnsemblMetazoa" id="F09E8.2b.2">
    <molecule id="Q19267-2"/>
    <property type="protein sequence ID" value="F09E8.2b.2"/>
    <property type="gene ID" value="WBGene00008624"/>
</dbReference>
<dbReference type="GeneID" id="178267"/>
<dbReference type="KEGG" id="cel:CELE_F09E8.2"/>
<dbReference type="UCSC" id="F09E8.2b">
    <property type="organism name" value="c. elegans"/>
</dbReference>
<dbReference type="AGR" id="WB:WBGene00008624"/>
<dbReference type="CTD" id="178267"/>
<dbReference type="WormBase" id="F09E8.2a">
    <molecule id="Q19267-1"/>
    <property type="protein sequence ID" value="CE05579"/>
    <property type="gene ID" value="WBGene00008624"/>
    <property type="gene designation" value="crld-1"/>
</dbReference>
<dbReference type="WormBase" id="F09E8.2b">
    <molecule id="Q19267-2"/>
    <property type="protein sequence ID" value="CE41378"/>
    <property type="gene ID" value="WBGene00008624"/>
    <property type="gene designation" value="crld-1"/>
</dbReference>
<dbReference type="eggNOG" id="KOG4260">
    <property type="taxonomic scope" value="Eukaryota"/>
</dbReference>
<dbReference type="HOGENOM" id="CLU_038974_1_0_1"/>
<dbReference type="InParanoid" id="Q19267"/>
<dbReference type="OMA" id="MCSNCDA"/>
<dbReference type="OrthoDB" id="19903at2759"/>
<dbReference type="PhylomeDB" id="Q19267"/>
<dbReference type="PRO" id="PR:Q19267"/>
<dbReference type="Proteomes" id="UP000001940">
    <property type="component" value="Chromosome IV"/>
</dbReference>
<dbReference type="Bgee" id="WBGene00008624">
    <property type="expression patterns" value="Expressed in pharyngeal muscle cell (C elegans) and 4 other cell types or tissues"/>
</dbReference>
<dbReference type="GO" id="GO:0005788">
    <property type="term" value="C:endoplasmic reticulum lumen"/>
    <property type="evidence" value="ECO:0007669"/>
    <property type="project" value="UniProtKB-SubCell"/>
</dbReference>
<dbReference type="GO" id="GO:0005789">
    <property type="term" value="C:endoplasmic reticulum membrane"/>
    <property type="evidence" value="ECO:0007669"/>
    <property type="project" value="UniProtKB-SubCell"/>
</dbReference>
<dbReference type="GO" id="GO:0005509">
    <property type="term" value="F:calcium ion binding"/>
    <property type="evidence" value="ECO:0007669"/>
    <property type="project" value="InterPro"/>
</dbReference>
<dbReference type="GO" id="GO:0003756">
    <property type="term" value="F:protein disulfide isomerase activity"/>
    <property type="evidence" value="ECO:0007669"/>
    <property type="project" value="UniProtKB-EC"/>
</dbReference>
<dbReference type="GO" id="GO:0036498">
    <property type="term" value="P:IRE1-mediated unfolded protein response"/>
    <property type="evidence" value="ECO:0007007"/>
    <property type="project" value="WormBase"/>
</dbReference>
<dbReference type="CDD" id="cd00054">
    <property type="entry name" value="EGF_CA"/>
    <property type="match status" value="1"/>
</dbReference>
<dbReference type="Gene3D" id="2.10.25.10">
    <property type="entry name" value="Laminin"/>
    <property type="match status" value="1"/>
</dbReference>
<dbReference type="InterPro" id="IPR021852">
    <property type="entry name" value="DUF3456"/>
</dbReference>
<dbReference type="InterPro" id="IPR001881">
    <property type="entry name" value="EGF-like_Ca-bd_dom"/>
</dbReference>
<dbReference type="InterPro" id="IPR000742">
    <property type="entry name" value="EGF-like_dom"/>
</dbReference>
<dbReference type="InterPro" id="IPR000152">
    <property type="entry name" value="EGF-type_Asp/Asn_hydroxyl_site"/>
</dbReference>
<dbReference type="InterPro" id="IPR018097">
    <property type="entry name" value="EGF_Ca-bd_CS"/>
</dbReference>
<dbReference type="InterPro" id="IPR009030">
    <property type="entry name" value="Growth_fac_rcpt_cys_sf"/>
</dbReference>
<dbReference type="InterPro" id="IPR002049">
    <property type="entry name" value="LE_dom"/>
</dbReference>
<dbReference type="InterPro" id="IPR049883">
    <property type="entry name" value="NOTCH1_EGF-like"/>
</dbReference>
<dbReference type="PANTHER" id="PTHR24039:SF58">
    <property type="entry name" value="EGF-LIKE DOMAIN-CONTAINING PROTEIN"/>
    <property type="match status" value="1"/>
</dbReference>
<dbReference type="PANTHER" id="PTHR24039">
    <property type="entry name" value="FIBRILLIN-RELATED"/>
    <property type="match status" value="1"/>
</dbReference>
<dbReference type="Pfam" id="PF11938">
    <property type="entry name" value="DUF3456"/>
    <property type="match status" value="2"/>
</dbReference>
<dbReference type="Pfam" id="PF07645">
    <property type="entry name" value="EGF_CA"/>
    <property type="match status" value="1"/>
</dbReference>
<dbReference type="SMART" id="SM00181">
    <property type="entry name" value="EGF"/>
    <property type="match status" value="3"/>
</dbReference>
<dbReference type="SMART" id="SM00179">
    <property type="entry name" value="EGF_CA"/>
    <property type="match status" value="1"/>
</dbReference>
<dbReference type="SUPFAM" id="SSF57184">
    <property type="entry name" value="Growth factor receptor domain"/>
    <property type="match status" value="1"/>
</dbReference>
<dbReference type="PROSITE" id="PS00010">
    <property type="entry name" value="ASX_HYDROXYL"/>
    <property type="match status" value="1"/>
</dbReference>
<dbReference type="PROSITE" id="PS00022">
    <property type="entry name" value="EGF_1"/>
    <property type="match status" value="1"/>
</dbReference>
<dbReference type="PROSITE" id="PS01186">
    <property type="entry name" value="EGF_2"/>
    <property type="match status" value="2"/>
</dbReference>
<dbReference type="PROSITE" id="PS50026">
    <property type="entry name" value="EGF_3"/>
    <property type="match status" value="2"/>
</dbReference>
<dbReference type="PROSITE" id="PS01187">
    <property type="entry name" value="EGF_CA"/>
    <property type="match status" value="1"/>
</dbReference>
<dbReference type="PROSITE" id="PS01248">
    <property type="entry name" value="EGF_LAM_1"/>
    <property type="match status" value="1"/>
</dbReference>
<gene>
    <name evidence="5 9" type="primary">crld-1</name>
    <name evidence="9" type="ORF">F09E8.2</name>
</gene>
<comment type="function">
    <text evidence="4">Protein disulfide isomerase which associates with the unc-29 subunit of levamisole-sensitive nicotinic acetylcholine receptors (L-nAChR) to promote L-nAChR assembly in the endoplasmic reticulum at neuromuscular junctions.</text>
</comment>
<comment type="function">
    <molecule>Isoform a</molecule>
    <text evidence="4">Promotes L-nAChR assembly in the endoplasmic reticulum at neuromuscular junctions.</text>
</comment>
<comment type="catalytic activity">
    <reaction evidence="4">
        <text>Catalyzes the rearrangement of -S-S- bonds in proteins.</text>
        <dbReference type="EC" id="5.3.4.1"/>
    </reaction>
</comment>
<comment type="subunit">
    <text evidence="4">Interacts with unc-29.</text>
</comment>
<comment type="subcellular location">
    <molecule>Isoform a</molecule>
    <subcellularLocation>
        <location evidence="4">Endoplasmic reticulum membrane</location>
        <topology evidence="1">Multi-pass membrane protein</topology>
    </subcellularLocation>
</comment>
<comment type="subcellular location">
    <molecule>Isoform b</molecule>
    <subcellularLocation>
        <location evidence="4">Endoplasmic reticulum lumen</location>
    </subcellularLocation>
    <text evidence="7">Ends with a KDEL sequence, which is an endoplasmic reticulum retention signal.</text>
</comment>
<comment type="alternative products">
    <event type="alternative splicing"/>
    <isoform>
        <id>Q19267-1</id>
        <name evidence="9">a</name>
        <sequence type="displayed"/>
    </isoform>
    <isoform>
        <id>Q19267-2</id>
        <name evidence="10">b</name>
        <sequence type="described" ref="VSP_060244 VSP_060245"/>
    </isoform>
</comment>
<comment type="tissue specificity">
    <text evidence="4">Isoforms a: Widely expressed in tissues including body wall muscles, neurons, pharynx, hypodermis, seam cells, intestine and gonad (PubMed:30407909). Isoform b: Widely expressed in tissues including body wall muscles, neurons, pharynx, hypodermis, seam cells, intestine and gonad (PubMed:30407909).</text>
</comment>
<comment type="disruption phenotype">
    <text evidence="4">Viable, with no defects in coordination (PubMed:30407909). Decreased number of synaptic nicotinic acetylcholine receptors (nAChRs) at neuromuscular junctions (PubMed:30407909). Isoform a: Deletion leads to reduced sensitivity to the nAChR agonist levamisole (PubMed:30407909). Isoform b: Deletion leads to sensitivity to levamisole as in wild-type (PubMed:30407909).</text>
</comment>
<comment type="similarity">
    <text evidence="6">Belongs to the CRELD family.</text>
</comment>
<protein>
    <recommendedName>
        <fullName evidence="5">Protein disulfide isomerase crld-1</fullName>
        <ecNumber evidence="4">5.3.4.1</ecNumber>
    </recommendedName>
    <alternativeName>
        <fullName evidence="9">Cysteine-rich with EGF-like domain protein crld-1</fullName>
    </alternativeName>
</protein>
<feature type="signal peptide" evidence="1">
    <location>
        <begin position="1"/>
        <end position="17"/>
    </location>
</feature>
<feature type="chain" id="PRO_5004187109" description="Protein disulfide isomerase crld-1" evidence="1">
    <location>
        <begin position="18"/>
        <end position="356"/>
    </location>
</feature>
<feature type="topological domain" description="Lumenal" evidence="7">
    <location>
        <begin position="18"/>
        <end position="299"/>
    </location>
</feature>
<feature type="transmembrane region" description="Helical" evidence="1">
    <location>
        <begin position="300"/>
        <end position="317"/>
    </location>
</feature>
<feature type="topological domain" description="Cytoplasmic" evidence="7">
    <location>
        <begin position="318"/>
        <end position="321"/>
    </location>
</feature>
<feature type="transmembrane region" description="Helical" evidence="1">
    <location>
        <begin position="322"/>
        <end position="341"/>
    </location>
</feature>
<feature type="topological domain" description="Lumenal" evidence="7">
    <location>
        <begin position="342"/>
        <end position="356"/>
    </location>
</feature>
<feature type="domain" description="EGF-like 1" evidence="2">
    <location>
        <begin position="150"/>
        <end position="188"/>
    </location>
</feature>
<feature type="domain" description="EGF-like 2; calcium-binding" evidence="2">
    <location>
        <begin position="241"/>
        <end position="282"/>
    </location>
</feature>
<feature type="short sequence motif" description="CXXC" evidence="7">
    <location>
        <begin position="27"/>
        <end position="30"/>
    </location>
</feature>
<feature type="glycosylation site" description="N-linked (GlcNAc...) asparagine" evidence="3">
    <location>
        <position position="122"/>
    </location>
</feature>
<feature type="glycosylation site" description="N-linked (GlcNAc...) asparagine" evidence="3">
    <location>
        <position position="247"/>
    </location>
</feature>
<feature type="disulfide bond" description="Redox-active" evidence="7">
    <location>
        <begin position="27"/>
        <end position="30"/>
    </location>
</feature>
<feature type="disulfide bond" evidence="2">
    <location>
        <begin position="158"/>
        <end position="176"/>
    </location>
</feature>
<feature type="disulfide bond" evidence="2">
    <location>
        <begin position="178"/>
        <end position="187"/>
    </location>
</feature>
<feature type="disulfide bond" evidence="2">
    <location>
        <begin position="245"/>
        <end position="258"/>
    </location>
</feature>
<feature type="disulfide bond" evidence="2">
    <location>
        <begin position="251"/>
        <end position="267"/>
    </location>
</feature>
<feature type="disulfide bond" evidence="2">
    <location>
        <begin position="269"/>
        <end position="281"/>
    </location>
</feature>
<feature type="splice variant" id="VSP_060244" description="In isoform b." evidence="6">
    <original>SPDRPFMPIDQQLKLIAFSSLII</original>
    <variation>LKATEQQAHEDEDGDDDDEKDEL</variation>
    <location>
        <begin position="288"/>
        <end position="310"/>
    </location>
</feature>
<feature type="splice variant" id="VSP_060245" description="In isoform b." evidence="6">
    <location>
        <begin position="311"/>
        <end position="356"/>
    </location>
</feature>
<feature type="mutagenesis site" description="In kr302; substrate-trapping mutant. Reduced sensitivity to the nicotinic acetylcholine receptor (nAChR) agonist levamisole." evidence="4">
    <original>C</original>
    <variation>A</variation>
    <location>
        <position position="30"/>
    </location>
</feature>
<reference evidence="8" key="1">
    <citation type="journal article" date="1998" name="Science">
        <title>Genome sequence of the nematode C. elegans: a platform for investigating biology.</title>
        <authorList>
            <consortium name="The C. elegans sequencing consortium"/>
        </authorList>
    </citation>
    <scope>NUCLEOTIDE SEQUENCE [LARGE SCALE GENOMIC DNA]</scope>
    <source>
        <strain evidence="8">Bristol N2</strain>
    </source>
</reference>
<reference evidence="6" key="2">
    <citation type="journal article" date="2018" name="Elife">
        <title>CRELD1 is an evolutionarily-conserved maturational enhancer of ionotropic acetylcholine receptors.</title>
        <authorList>
            <person name="D'Alessandro M."/>
            <person name="Richard M."/>
            <person name="Stigloher C."/>
            <person name="Gache V."/>
            <person name="Boulin T."/>
            <person name="Richmond J.E."/>
            <person name="Bessereau J.L."/>
        </authorList>
    </citation>
    <scope>FUNCTION</scope>
    <scope>CATALYTIC ACTIVITY</scope>
    <scope>INTERACTION WITH UNC-29</scope>
    <scope>SUBCELLULAR LOCATION</scope>
    <scope>TISSUE SPECIFICITY</scope>
    <scope>DISRUPTION PHENOTYPE</scope>
    <scope>TOPOLOGY</scope>
    <scope>MUTAGENESIS OF CYS-30</scope>
</reference>